<feature type="chain" id="PRO_0000218986" description="E3 SUMO-protein ligase pli1">
    <location>
        <begin position="1"/>
        <end position="727"/>
    </location>
</feature>
<feature type="domain" description="SAP" evidence="1">
    <location>
        <begin position="18"/>
        <end position="52"/>
    </location>
</feature>
<feature type="domain" description="PINIT" evidence="3">
    <location>
        <begin position="108"/>
        <end position="261"/>
    </location>
</feature>
<feature type="zinc finger region" description="SP-RING-type" evidence="2">
    <location>
        <begin position="290"/>
        <end position="371"/>
    </location>
</feature>
<feature type="region of interest" description="Disordered" evidence="4">
    <location>
        <begin position="408"/>
        <end position="558"/>
    </location>
</feature>
<feature type="region of interest" description="Disordered" evidence="4">
    <location>
        <begin position="706"/>
        <end position="727"/>
    </location>
</feature>
<feature type="compositionally biased region" description="Polar residues" evidence="4">
    <location>
        <begin position="417"/>
        <end position="435"/>
    </location>
</feature>
<feature type="compositionally biased region" description="Polar residues" evidence="4">
    <location>
        <begin position="459"/>
        <end position="494"/>
    </location>
</feature>
<feature type="compositionally biased region" description="Low complexity" evidence="4">
    <location>
        <begin position="546"/>
        <end position="558"/>
    </location>
</feature>
<feature type="binding site" evidence="2">
    <location>
        <position position="321"/>
    </location>
    <ligand>
        <name>Zn(2+)</name>
        <dbReference type="ChEBI" id="CHEBI:29105"/>
    </ligand>
</feature>
<feature type="binding site" evidence="2">
    <location>
        <position position="323"/>
    </location>
    <ligand>
        <name>Zn(2+)</name>
        <dbReference type="ChEBI" id="CHEBI:29105"/>
    </ligand>
</feature>
<feature type="binding site" evidence="2">
    <location>
        <position position="344"/>
    </location>
    <ligand>
        <name>Zn(2+)</name>
        <dbReference type="ChEBI" id="CHEBI:29105"/>
    </ligand>
</feature>
<feature type="binding site" evidence="2">
    <location>
        <position position="347"/>
    </location>
    <ligand>
        <name>Zn(2+)</name>
        <dbReference type="ChEBI" id="CHEBI:29105"/>
    </ligand>
</feature>
<feature type="modified residue" description="Phosphoserine" evidence="7">
    <location>
        <position position="395"/>
    </location>
</feature>
<feature type="modified residue" description="Phosphoserine" evidence="7">
    <location>
        <position position="396"/>
    </location>
</feature>
<feature type="mutagenesis site" description="Reduction in sumoylation of rad22." evidence="6">
    <original>C</original>
    <variation>S</variation>
    <location>
        <position position="321"/>
    </location>
</feature>
<feature type="mutagenesis site" description="Reduction in sumoylation of rad22." evidence="6">
    <original>H</original>
    <variation>A</variation>
    <location>
        <position position="323"/>
    </location>
</feature>
<feature type="mutagenesis site" description="Reduction in sumoylation of rad22." evidence="6">
    <original>C</original>
    <variation>S</variation>
    <location>
        <position position="326"/>
    </location>
</feature>
<accession>O94451</accession>
<dbReference type="EC" id="2.3.2.-"/>
<dbReference type="EMBL" id="CU329670">
    <property type="protein sequence ID" value="CAA22599.1"/>
    <property type="molecule type" value="Genomic_DNA"/>
</dbReference>
<dbReference type="EMBL" id="AB027790">
    <property type="protein sequence ID" value="BAA87094.1"/>
    <property type="molecule type" value="Genomic_DNA"/>
</dbReference>
<dbReference type="PIR" id="T37748">
    <property type="entry name" value="T37748"/>
</dbReference>
<dbReference type="RefSeq" id="NP_593123.1">
    <property type="nucleotide sequence ID" value="NM_001018519.2"/>
</dbReference>
<dbReference type="SMR" id="O94451"/>
<dbReference type="BioGRID" id="278077">
    <property type="interactions" value="96"/>
</dbReference>
<dbReference type="DIP" id="DIP-38715N"/>
<dbReference type="FunCoup" id="O94451">
    <property type="interactions" value="298"/>
</dbReference>
<dbReference type="IntAct" id="O94451">
    <property type="interactions" value="3"/>
</dbReference>
<dbReference type="MINT" id="O94451"/>
<dbReference type="STRING" id="284812.O94451"/>
<dbReference type="iPTMnet" id="O94451"/>
<dbReference type="SwissPalm" id="O94451"/>
<dbReference type="PaxDb" id="4896-SPAC1687.05.1"/>
<dbReference type="EnsemblFungi" id="SPAC1687.05.1">
    <property type="protein sequence ID" value="SPAC1687.05.1:pep"/>
    <property type="gene ID" value="SPAC1687.05"/>
</dbReference>
<dbReference type="GeneID" id="2541580"/>
<dbReference type="KEGG" id="spo:2541580"/>
<dbReference type="PomBase" id="SPAC1687.05">
    <property type="gene designation" value="pli1"/>
</dbReference>
<dbReference type="VEuPathDB" id="FungiDB:SPAC1687.05"/>
<dbReference type="eggNOG" id="KOG2169">
    <property type="taxonomic scope" value="Eukaryota"/>
</dbReference>
<dbReference type="HOGENOM" id="CLU_020537_1_0_1"/>
<dbReference type="InParanoid" id="O94451"/>
<dbReference type="OMA" id="MELRINN"/>
<dbReference type="PhylomeDB" id="O94451"/>
<dbReference type="Reactome" id="R-SPO-3232118">
    <property type="pathway name" value="SUMOylation of transcription factors"/>
</dbReference>
<dbReference type="Reactome" id="R-SPO-3899300">
    <property type="pathway name" value="SUMOylation of transcription cofactors"/>
</dbReference>
<dbReference type="Reactome" id="R-SPO-4085377">
    <property type="pathway name" value="SUMOylation of SUMOylation proteins"/>
</dbReference>
<dbReference type="Reactome" id="R-SPO-4551638">
    <property type="pathway name" value="SUMOylation of chromatin organization proteins"/>
</dbReference>
<dbReference type="Reactome" id="R-SPO-5693565">
    <property type="pathway name" value="Recruitment and ATM-mediated phosphorylation of repair and signaling proteins at DNA double strand breaks"/>
</dbReference>
<dbReference type="Reactome" id="R-SPO-5696395">
    <property type="pathway name" value="Formation of Incision Complex in GG-NER"/>
</dbReference>
<dbReference type="UniPathway" id="UPA00886"/>
<dbReference type="PRO" id="PR:O94451"/>
<dbReference type="Proteomes" id="UP000002485">
    <property type="component" value="Chromosome I"/>
</dbReference>
<dbReference type="GO" id="GO:0000785">
    <property type="term" value="C:chromatin"/>
    <property type="evidence" value="ECO:0000318"/>
    <property type="project" value="GO_Central"/>
</dbReference>
<dbReference type="GO" id="GO:0005634">
    <property type="term" value="C:nucleus"/>
    <property type="evidence" value="ECO:0000314"/>
    <property type="project" value="PomBase"/>
</dbReference>
<dbReference type="GO" id="GO:0035861">
    <property type="term" value="C:site of double-strand break"/>
    <property type="evidence" value="ECO:0000314"/>
    <property type="project" value="PomBase"/>
</dbReference>
<dbReference type="GO" id="GO:0061665">
    <property type="term" value="F:SUMO ligase activity"/>
    <property type="evidence" value="ECO:0000314"/>
    <property type="project" value="PomBase"/>
</dbReference>
<dbReference type="GO" id="GO:0008270">
    <property type="term" value="F:zinc ion binding"/>
    <property type="evidence" value="ECO:0007669"/>
    <property type="project" value="UniProtKB-KW"/>
</dbReference>
<dbReference type="GO" id="GO:0072766">
    <property type="term" value="P:centromere clustering at the mitotic interphase nuclear envelope"/>
    <property type="evidence" value="ECO:0000315"/>
    <property type="project" value="PomBase"/>
</dbReference>
<dbReference type="GO" id="GO:0030999">
    <property type="term" value="P:linear element assembly"/>
    <property type="evidence" value="ECO:0000315"/>
    <property type="project" value="PomBase"/>
</dbReference>
<dbReference type="GO" id="GO:0036299">
    <property type="term" value="P:non-recombinational interstrand cross-link repair"/>
    <property type="evidence" value="ECO:0000315"/>
    <property type="project" value="PomBase"/>
</dbReference>
<dbReference type="GO" id="GO:0016925">
    <property type="term" value="P:protein sumoylation"/>
    <property type="evidence" value="ECO:0000318"/>
    <property type="project" value="GO_Central"/>
</dbReference>
<dbReference type="GO" id="GO:0007131">
    <property type="term" value="P:reciprocal meiotic recombination"/>
    <property type="evidence" value="ECO:0000315"/>
    <property type="project" value="PomBase"/>
</dbReference>
<dbReference type="GO" id="GO:0031297">
    <property type="term" value="P:replication fork processing"/>
    <property type="evidence" value="ECO:0000315"/>
    <property type="project" value="PomBase"/>
</dbReference>
<dbReference type="GO" id="GO:0120290">
    <property type="term" value="P:stalled replication fork localization to nuclear periphery"/>
    <property type="evidence" value="ECO:0000315"/>
    <property type="project" value="PomBase"/>
</dbReference>
<dbReference type="CDD" id="cd16792">
    <property type="entry name" value="SP-RING_Siz-like"/>
    <property type="match status" value="1"/>
</dbReference>
<dbReference type="FunFam" id="3.30.40.10:FF:000247">
    <property type="entry name" value="Uncharacterized protein, isoform B"/>
    <property type="match status" value="1"/>
</dbReference>
<dbReference type="Gene3D" id="2.60.120.780">
    <property type="entry name" value="PINIT domain"/>
    <property type="match status" value="1"/>
</dbReference>
<dbReference type="Gene3D" id="1.10.720.30">
    <property type="entry name" value="SAP domain"/>
    <property type="match status" value="1"/>
</dbReference>
<dbReference type="Gene3D" id="3.30.40.10">
    <property type="entry name" value="Zinc/RING finger domain, C3HC4 (zinc finger)"/>
    <property type="match status" value="1"/>
</dbReference>
<dbReference type="InterPro" id="IPR023321">
    <property type="entry name" value="PINIT"/>
</dbReference>
<dbReference type="InterPro" id="IPR038654">
    <property type="entry name" value="PINIT_sf"/>
</dbReference>
<dbReference type="InterPro" id="IPR003034">
    <property type="entry name" value="SAP_dom"/>
</dbReference>
<dbReference type="InterPro" id="IPR036361">
    <property type="entry name" value="SAP_dom_sf"/>
</dbReference>
<dbReference type="InterPro" id="IPR031141">
    <property type="entry name" value="SIZ1/2_SP-RING"/>
</dbReference>
<dbReference type="InterPro" id="IPR004181">
    <property type="entry name" value="Znf_MIZ"/>
</dbReference>
<dbReference type="InterPro" id="IPR013083">
    <property type="entry name" value="Znf_RING/FYVE/PHD"/>
</dbReference>
<dbReference type="PANTHER" id="PTHR10782:SF4">
    <property type="entry name" value="TONALLI, ISOFORM E"/>
    <property type="match status" value="1"/>
</dbReference>
<dbReference type="PANTHER" id="PTHR10782">
    <property type="entry name" value="ZINC FINGER MIZ DOMAIN-CONTAINING PROTEIN"/>
    <property type="match status" value="1"/>
</dbReference>
<dbReference type="Pfam" id="PF14324">
    <property type="entry name" value="PINIT"/>
    <property type="match status" value="1"/>
</dbReference>
<dbReference type="Pfam" id="PF02037">
    <property type="entry name" value="SAP"/>
    <property type="match status" value="1"/>
</dbReference>
<dbReference type="Pfam" id="PF02891">
    <property type="entry name" value="zf-MIZ"/>
    <property type="match status" value="1"/>
</dbReference>
<dbReference type="SMART" id="SM00513">
    <property type="entry name" value="SAP"/>
    <property type="match status" value="1"/>
</dbReference>
<dbReference type="SUPFAM" id="SSF68906">
    <property type="entry name" value="SAP domain"/>
    <property type="match status" value="1"/>
</dbReference>
<dbReference type="PROSITE" id="PS51466">
    <property type="entry name" value="PINIT"/>
    <property type="match status" value="1"/>
</dbReference>
<dbReference type="PROSITE" id="PS50800">
    <property type="entry name" value="SAP"/>
    <property type="match status" value="1"/>
</dbReference>
<dbReference type="PROSITE" id="PS51044">
    <property type="entry name" value="ZF_SP_RING"/>
    <property type="match status" value="1"/>
</dbReference>
<sequence>MNQANFLQELPNVLKRLETGLIIPQLKDILRVFGLRLSGTKAELITRIKQLIERIAIENNTTSWEALKKAIDGDVTSAVCILKYNTYQIYSAAAPIAPPSSASGNRSYSRPFAPVVHSRIRFRKSPFYDILEQFNAPFVVPACVGTRNTISFSFHVTPPALSKLLNDPKQYRVYLFSTPSETIGFGNCLMEFPTPQMELRINNQVAHANYRRLKGKPGTTNPADITDLVSKYAGPPGNNVVIYYMNSTKSYSVVVCFVKVYTIENLVDQIKSRKAESKEKIIERIKNDNQDADIIATSTDISLKCPLSFSRISLPVRSVFCKHIQCFDASAFLEMNKQTPSWMCPVCASHIQFSDLIIDGFMQHILESTPSNSETITVDPEGNWKLNTFDEPVESSEDEFVPKEKVIELSDGEGISTMANKSNDQPTRRASTHNSGPPAKRKRESLVIDLTISDDDENVATSTTESPSNATKENSLSRNVQSPNIDTAISNRSTNVRHGHPGFKDYTVENSPASRERSTSESAQSSVHMGYAGEGGLLSGALRAPSQQNNNNSNTQHSINLHTIVPSPYEPPLSVTPSTAITNLSIPESNRTNSSASSKSFTMNDLILPPLHLKNTTQTNNAHEDAQSSNLSQNHSLFYERIPQRPSYRIEKQNKGIYEDENEQSISAMPIPRAHPQLPKNLLSQTAGPLWDEQQDAQVDWNSELQSNNSYHNSGFEGTGNTFQSID</sequence>
<keyword id="KW-0479">Metal-binding</keyword>
<keyword id="KW-0539">Nucleus</keyword>
<keyword id="KW-0597">Phosphoprotein</keyword>
<keyword id="KW-1185">Reference proteome</keyword>
<keyword id="KW-0808">Transferase</keyword>
<keyword id="KW-0833">Ubl conjugation pathway</keyword>
<keyword id="KW-0862">Zinc</keyword>
<keyword id="KW-0863">Zinc-finger</keyword>
<organism>
    <name type="scientific">Schizosaccharomyces pombe (strain 972 / ATCC 24843)</name>
    <name type="common">Fission yeast</name>
    <dbReference type="NCBI Taxonomy" id="284812"/>
    <lineage>
        <taxon>Eukaryota</taxon>
        <taxon>Fungi</taxon>
        <taxon>Dikarya</taxon>
        <taxon>Ascomycota</taxon>
        <taxon>Taphrinomycotina</taxon>
        <taxon>Schizosaccharomycetes</taxon>
        <taxon>Schizosaccharomycetales</taxon>
        <taxon>Schizosaccharomycetaceae</taxon>
        <taxon>Schizosaccharomyces</taxon>
    </lineage>
</organism>
<proteinExistence type="evidence at protein level"/>
<gene>
    <name type="primary">pli1</name>
    <name type="ORF">SPAC1687.05</name>
</gene>
<evidence type="ECO:0000255" key="1">
    <source>
        <dbReference type="PROSITE-ProRule" id="PRU00186"/>
    </source>
</evidence>
<evidence type="ECO:0000255" key="2">
    <source>
        <dbReference type="PROSITE-ProRule" id="PRU00452"/>
    </source>
</evidence>
<evidence type="ECO:0000255" key="3">
    <source>
        <dbReference type="PROSITE-ProRule" id="PRU00799"/>
    </source>
</evidence>
<evidence type="ECO:0000256" key="4">
    <source>
        <dbReference type="SAM" id="MobiDB-lite"/>
    </source>
</evidence>
<evidence type="ECO:0000269" key="5">
    <source>
    </source>
</evidence>
<evidence type="ECO:0000269" key="6">
    <source>
    </source>
</evidence>
<evidence type="ECO:0000269" key="7">
    <source>
    </source>
</evidence>
<evidence type="ECO:0000305" key="8"/>
<name>PLI1_SCHPO</name>
<reference key="1">
    <citation type="journal article" date="2002" name="Nature">
        <title>The genome sequence of Schizosaccharomyces pombe.</title>
        <authorList>
            <person name="Wood V."/>
            <person name="Gwilliam R."/>
            <person name="Rajandream M.A."/>
            <person name="Lyne M.H."/>
            <person name="Lyne R."/>
            <person name="Stewart A."/>
            <person name="Sgouros J.G."/>
            <person name="Peat N."/>
            <person name="Hayles J."/>
            <person name="Baker S.G."/>
            <person name="Basham D."/>
            <person name="Bowman S."/>
            <person name="Brooks K."/>
            <person name="Brown D."/>
            <person name="Brown S."/>
            <person name="Chillingworth T."/>
            <person name="Churcher C.M."/>
            <person name="Collins M."/>
            <person name="Connor R."/>
            <person name="Cronin A."/>
            <person name="Davis P."/>
            <person name="Feltwell T."/>
            <person name="Fraser A."/>
            <person name="Gentles S."/>
            <person name="Goble A."/>
            <person name="Hamlin N."/>
            <person name="Harris D.E."/>
            <person name="Hidalgo J."/>
            <person name="Hodgson G."/>
            <person name="Holroyd S."/>
            <person name="Hornsby T."/>
            <person name="Howarth S."/>
            <person name="Huckle E.J."/>
            <person name="Hunt S."/>
            <person name="Jagels K."/>
            <person name="James K.D."/>
            <person name="Jones L."/>
            <person name="Jones M."/>
            <person name="Leather S."/>
            <person name="McDonald S."/>
            <person name="McLean J."/>
            <person name="Mooney P."/>
            <person name="Moule S."/>
            <person name="Mungall K.L."/>
            <person name="Murphy L.D."/>
            <person name="Niblett D."/>
            <person name="Odell C."/>
            <person name="Oliver K."/>
            <person name="O'Neil S."/>
            <person name="Pearson D."/>
            <person name="Quail M.A."/>
            <person name="Rabbinowitsch E."/>
            <person name="Rutherford K.M."/>
            <person name="Rutter S."/>
            <person name="Saunders D."/>
            <person name="Seeger K."/>
            <person name="Sharp S."/>
            <person name="Skelton J."/>
            <person name="Simmonds M.N."/>
            <person name="Squares R."/>
            <person name="Squares S."/>
            <person name="Stevens K."/>
            <person name="Taylor K."/>
            <person name="Taylor R.G."/>
            <person name="Tivey A."/>
            <person name="Walsh S.V."/>
            <person name="Warren T."/>
            <person name="Whitehead S."/>
            <person name="Woodward J.R."/>
            <person name="Volckaert G."/>
            <person name="Aert R."/>
            <person name="Robben J."/>
            <person name="Grymonprez B."/>
            <person name="Weltjens I."/>
            <person name="Vanstreels E."/>
            <person name="Rieger M."/>
            <person name="Schaefer M."/>
            <person name="Mueller-Auer S."/>
            <person name="Gabel C."/>
            <person name="Fuchs M."/>
            <person name="Duesterhoeft A."/>
            <person name="Fritzc C."/>
            <person name="Holzer E."/>
            <person name="Moestl D."/>
            <person name="Hilbert H."/>
            <person name="Borzym K."/>
            <person name="Langer I."/>
            <person name="Beck A."/>
            <person name="Lehrach H."/>
            <person name="Reinhardt R."/>
            <person name="Pohl T.M."/>
            <person name="Eger P."/>
            <person name="Zimmermann W."/>
            <person name="Wedler H."/>
            <person name="Wambutt R."/>
            <person name="Purnelle B."/>
            <person name="Goffeau A."/>
            <person name="Cadieu E."/>
            <person name="Dreano S."/>
            <person name="Gloux S."/>
            <person name="Lelaure V."/>
            <person name="Mottier S."/>
            <person name="Galibert F."/>
            <person name="Aves S.J."/>
            <person name="Xiang Z."/>
            <person name="Hunt C."/>
            <person name="Moore K."/>
            <person name="Hurst S.M."/>
            <person name="Lucas M."/>
            <person name="Rochet M."/>
            <person name="Gaillardin C."/>
            <person name="Tallada V.A."/>
            <person name="Garzon A."/>
            <person name="Thode G."/>
            <person name="Daga R.R."/>
            <person name="Cruzado L."/>
            <person name="Jimenez J."/>
            <person name="Sanchez M."/>
            <person name="del Rey F."/>
            <person name="Benito J."/>
            <person name="Dominguez A."/>
            <person name="Revuelta J.L."/>
            <person name="Moreno S."/>
            <person name="Armstrong J."/>
            <person name="Forsburg S.L."/>
            <person name="Cerutti L."/>
            <person name="Lowe T."/>
            <person name="McCombie W.R."/>
            <person name="Paulsen I."/>
            <person name="Potashkin J."/>
            <person name="Shpakovski G.V."/>
            <person name="Ussery D."/>
            <person name="Barrell B.G."/>
            <person name="Nurse P."/>
        </authorList>
    </citation>
    <scope>NUCLEOTIDE SEQUENCE [LARGE SCALE GENOMIC DNA]</scope>
    <source>
        <strain>972 / ATCC 24843</strain>
    </source>
</reference>
<reference key="2">
    <citation type="journal article" date="2000" name="Genes Cells">
        <title>Large-scale screening of intracellular protein localization in living fission yeast cells by the use of a GFP-fusion genomic DNA library.</title>
        <authorList>
            <person name="Ding D.-Q."/>
            <person name="Tomita Y."/>
            <person name="Yamamoto A."/>
            <person name="Chikashige Y."/>
            <person name="Haraguchi T."/>
            <person name="Hiraoka Y."/>
        </authorList>
    </citation>
    <scope>NUCLEOTIDE SEQUENCE [LARGE SCALE GENOMIC DNA] OF 12-107</scope>
    <scope>SUBCELLULAR LOCATION</scope>
    <source>
        <strain>ATCC 38364 / 968</strain>
    </source>
</reference>
<reference key="3">
    <citation type="journal article" date="2004" name="EMBO J.">
        <title>Role of the fission yeast SUMO E3 ligase Pli1p in centromere and telomere maintenance.</title>
        <authorList>
            <person name="Xhemalce B."/>
            <person name="Seeler J.-S."/>
            <person name="Thon G."/>
            <person name="Dejean A."/>
            <person name="Arcangioli B."/>
        </authorList>
    </citation>
    <scope>FUNCTION</scope>
    <scope>INTERACTION WITH HUS5</scope>
    <scope>SUBCELLULAR LOCATION</scope>
    <scope>MUTAGENESIS OF CYS-321; HIS-323 AND CYS-326</scope>
</reference>
<reference key="4">
    <citation type="journal article" date="2008" name="J. Proteome Res.">
        <title>Phosphoproteome analysis of fission yeast.</title>
        <authorList>
            <person name="Wilson-Grady J.T."/>
            <person name="Villen J."/>
            <person name="Gygi S.P."/>
        </authorList>
    </citation>
    <scope>PHOSPHORYLATION [LARGE SCALE ANALYSIS] AT SER-395 AND SER-396</scope>
    <scope>IDENTIFICATION BY MASS SPECTROMETRY</scope>
</reference>
<comment type="function">
    <text evidence="6">Acts as an E3 ligase mediating SUMO/Smt3 attachment to other proteins. Involved in the maintenance of the centromere and in telomere length. Regulates recombination, via extension sumoylation, particularly within the heterochromatin repeats.</text>
</comment>
<comment type="pathway">
    <text>Protein modification; protein sumoylation.</text>
</comment>
<comment type="subunit">
    <text evidence="6">Interacts with hus5/ubc9.</text>
</comment>
<comment type="subcellular location">
    <subcellularLocation>
        <location evidence="5 6">Nucleus</location>
    </subcellularLocation>
</comment>
<comment type="similarity">
    <text evidence="8">Belongs to the PIAS family.</text>
</comment>
<protein>
    <recommendedName>
        <fullName>E3 SUMO-protein ligase pli1</fullName>
        <ecNumber>2.3.2.-</ecNumber>
    </recommendedName>
    <alternativeName>
        <fullName evidence="8">E3 SUMO-protein transferase plil</fullName>
    </alternativeName>
</protein>